<feature type="chain" id="PRO_0000238614" description="Vesicle transport protein SFT2C">
    <location>
        <begin position="1"/>
        <end position="212"/>
    </location>
</feature>
<feature type="topological domain" description="Cytoplasmic" evidence="2">
    <location>
        <begin position="1"/>
        <end position="78"/>
    </location>
</feature>
<feature type="transmembrane region" description="Helical; Name=1" evidence="2">
    <location>
        <begin position="79"/>
        <end position="99"/>
    </location>
</feature>
<feature type="topological domain" description="Lumenal" evidence="2">
    <location>
        <begin position="100"/>
        <end position="104"/>
    </location>
</feature>
<feature type="transmembrane region" description="Helical; Name=2" evidence="2">
    <location>
        <begin position="105"/>
        <end position="125"/>
    </location>
</feature>
<feature type="topological domain" description="Cytoplasmic" evidence="2">
    <location>
        <begin position="126"/>
        <end position="142"/>
    </location>
</feature>
<feature type="transmembrane region" description="Helical; Name=3" evidence="2">
    <location>
        <begin position="143"/>
        <end position="165"/>
    </location>
</feature>
<feature type="topological domain" description="Lumenal" evidence="2">
    <location>
        <begin position="166"/>
        <end position="174"/>
    </location>
</feature>
<feature type="transmembrane region" description="Helical; Name=4" evidence="2">
    <location>
        <begin position="175"/>
        <end position="197"/>
    </location>
</feature>
<feature type="topological domain" description="Cytoplasmic" evidence="2">
    <location>
        <begin position="198"/>
        <end position="212"/>
    </location>
</feature>
<feature type="sequence conflict" description="In Ref. 1; BAB27904." evidence="3" ref="1">
    <location>
        <begin position="17"/>
        <end position="19"/>
    </location>
</feature>
<sequence>MADLHRQLQDYLKQGKASRPAAAEPLLGAKAAEEPEAGAWLGSRVLRWPWAQSAAEPPPAGLRCLPSVTRGQRLVAGGLCLLLAALCFGLAALYAPVLLLRARKFALLWSLGSVLAWASAALLRGGPACGRLLRGEETPSRSTLGYAAALGATLYAALVLRSTVLTALGACAQVAALLYALIGLLPWGGVTALRLALGRLNRGTGLANALPV</sequence>
<protein>
    <recommendedName>
        <fullName>Vesicle transport protein SFT2C</fullName>
    </recommendedName>
    <alternativeName>
        <fullName>SFT2 domain-containing protein 3</fullName>
    </alternativeName>
</protein>
<keyword id="KW-0472">Membrane</keyword>
<keyword id="KW-0653">Protein transport</keyword>
<keyword id="KW-1185">Reference proteome</keyword>
<keyword id="KW-0812">Transmembrane</keyword>
<keyword id="KW-1133">Transmembrane helix</keyword>
<keyword id="KW-0813">Transport</keyword>
<name>SFT2C_MOUSE</name>
<dbReference type="EMBL" id="AK011898">
    <property type="protein sequence ID" value="BAB27904.1"/>
    <property type="status" value="ALT_FRAME"/>
    <property type="molecule type" value="mRNA"/>
</dbReference>
<dbReference type="EMBL" id="AC131761">
    <property type="status" value="NOT_ANNOTATED_CDS"/>
    <property type="molecule type" value="Genomic_DNA"/>
</dbReference>
<dbReference type="CCDS" id="CCDS50243.1"/>
<dbReference type="RefSeq" id="NP_080282.1">
    <property type="nucleotide sequence ID" value="NM_026006.1"/>
</dbReference>
<dbReference type="FunCoup" id="Q9CSV6">
    <property type="interactions" value="1499"/>
</dbReference>
<dbReference type="STRING" id="10090.ENSMUSP00000100656"/>
<dbReference type="iPTMnet" id="Q9CSV6"/>
<dbReference type="PhosphoSitePlus" id="Q9CSV6"/>
<dbReference type="SwissPalm" id="Q9CSV6"/>
<dbReference type="PaxDb" id="10090-ENSMUSP00000100656"/>
<dbReference type="PeptideAtlas" id="Q9CSV6"/>
<dbReference type="ProteomicsDB" id="261199"/>
<dbReference type="ProteomicsDB" id="357448"/>
<dbReference type="Pumba" id="Q9CSV6"/>
<dbReference type="Antibodypedia" id="47566">
    <property type="antibodies" value="106 antibodies from 21 providers"/>
</dbReference>
<dbReference type="Ensembl" id="ENSMUST00000054984.8">
    <property type="protein sequence ID" value="ENSMUSP00000100656.3"/>
    <property type="gene ID" value="ENSMUSG00000044982.8"/>
</dbReference>
<dbReference type="GeneID" id="67158"/>
<dbReference type="KEGG" id="mmu:67158"/>
<dbReference type="AGR" id="MGI:1914408"/>
<dbReference type="CTD" id="84826"/>
<dbReference type="MGI" id="MGI:1914408">
    <property type="gene designation" value="Sft2d3"/>
</dbReference>
<dbReference type="VEuPathDB" id="HostDB:ENSMUSG00000044982"/>
<dbReference type="eggNOG" id="ENOG502QV5D">
    <property type="taxonomic scope" value="Eukaryota"/>
</dbReference>
<dbReference type="GeneTree" id="ENSGT00390000018525"/>
<dbReference type="HOGENOM" id="CLU_099529_3_1_1"/>
<dbReference type="InParanoid" id="Q9CSV6"/>
<dbReference type="OMA" id="GLMFFTR"/>
<dbReference type="OrthoDB" id="660759at2759"/>
<dbReference type="PhylomeDB" id="Q9CSV6"/>
<dbReference type="TreeFam" id="TF313609"/>
<dbReference type="BioGRID-ORCS" id="67158">
    <property type="hits" value="0 hits in 78 CRISPR screens"/>
</dbReference>
<dbReference type="ChiTaRS" id="Sft2d3">
    <property type="organism name" value="mouse"/>
</dbReference>
<dbReference type="PRO" id="PR:Q9CSV6"/>
<dbReference type="Proteomes" id="UP000000589">
    <property type="component" value="Chromosome 18"/>
</dbReference>
<dbReference type="RNAct" id="Q9CSV6">
    <property type="molecule type" value="protein"/>
</dbReference>
<dbReference type="Bgee" id="ENSMUSG00000044982">
    <property type="expression patterns" value="Expressed in otolith organ and 187 other cell types or tissues"/>
</dbReference>
<dbReference type="GO" id="GO:0005737">
    <property type="term" value="C:cytoplasm"/>
    <property type="evidence" value="ECO:0007669"/>
    <property type="project" value="UniProtKB-ARBA"/>
</dbReference>
<dbReference type="GO" id="GO:0012505">
    <property type="term" value="C:endomembrane system"/>
    <property type="evidence" value="ECO:0007669"/>
    <property type="project" value="UniProtKB-ARBA"/>
</dbReference>
<dbReference type="GO" id="GO:0043231">
    <property type="term" value="C:intracellular membrane-bounded organelle"/>
    <property type="evidence" value="ECO:0007669"/>
    <property type="project" value="UniProtKB-ARBA"/>
</dbReference>
<dbReference type="GO" id="GO:0016020">
    <property type="term" value="C:membrane"/>
    <property type="evidence" value="ECO:0007669"/>
    <property type="project" value="UniProtKB-SubCell"/>
</dbReference>
<dbReference type="GO" id="GO:0015031">
    <property type="term" value="P:protein transport"/>
    <property type="evidence" value="ECO:0007669"/>
    <property type="project" value="UniProtKB-KW"/>
</dbReference>
<dbReference type="GO" id="GO:0016192">
    <property type="term" value="P:vesicle-mediated transport"/>
    <property type="evidence" value="ECO:0007669"/>
    <property type="project" value="InterPro"/>
</dbReference>
<dbReference type="InterPro" id="IPR007305">
    <property type="entry name" value="Vesicle_transpt_Got1/SFT2"/>
</dbReference>
<dbReference type="InterPro" id="IPR011691">
    <property type="entry name" value="Vesicle_transpt_SFT2"/>
</dbReference>
<dbReference type="PANTHER" id="PTHR23137:SF36">
    <property type="entry name" value="VESICLE TRANSPORT PROTEIN SFT2C"/>
    <property type="match status" value="1"/>
</dbReference>
<dbReference type="PANTHER" id="PTHR23137">
    <property type="entry name" value="VESICLE TRANSPORT PROTEIN-RELATED"/>
    <property type="match status" value="1"/>
</dbReference>
<dbReference type="Pfam" id="PF04178">
    <property type="entry name" value="Got1"/>
    <property type="match status" value="1"/>
</dbReference>
<reference key="1">
    <citation type="journal article" date="2005" name="Science">
        <title>The transcriptional landscape of the mammalian genome.</title>
        <authorList>
            <person name="Carninci P."/>
            <person name="Kasukawa T."/>
            <person name="Katayama S."/>
            <person name="Gough J."/>
            <person name="Frith M.C."/>
            <person name="Maeda N."/>
            <person name="Oyama R."/>
            <person name="Ravasi T."/>
            <person name="Lenhard B."/>
            <person name="Wells C."/>
            <person name="Kodzius R."/>
            <person name="Shimokawa K."/>
            <person name="Bajic V.B."/>
            <person name="Brenner S.E."/>
            <person name="Batalov S."/>
            <person name="Forrest A.R."/>
            <person name="Zavolan M."/>
            <person name="Davis M.J."/>
            <person name="Wilming L.G."/>
            <person name="Aidinis V."/>
            <person name="Allen J.E."/>
            <person name="Ambesi-Impiombato A."/>
            <person name="Apweiler R."/>
            <person name="Aturaliya R.N."/>
            <person name="Bailey T.L."/>
            <person name="Bansal M."/>
            <person name="Baxter L."/>
            <person name="Beisel K.W."/>
            <person name="Bersano T."/>
            <person name="Bono H."/>
            <person name="Chalk A.M."/>
            <person name="Chiu K.P."/>
            <person name="Choudhary V."/>
            <person name="Christoffels A."/>
            <person name="Clutterbuck D.R."/>
            <person name="Crowe M.L."/>
            <person name="Dalla E."/>
            <person name="Dalrymple B.P."/>
            <person name="de Bono B."/>
            <person name="Della Gatta G."/>
            <person name="di Bernardo D."/>
            <person name="Down T."/>
            <person name="Engstrom P."/>
            <person name="Fagiolini M."/>
            <person name="Faulkner G."/>
            <person name="Fletcher C.F."/>
            <person name="Fukushima T."/>
            <person name="Furuno M."/>
            <person name="Futaki S."/>
            <person name="Gariboldi M."/>
            <person name="Georgii-Hemming P."/>
            <person name="Gingeras T.R."/>
            <person name="Gojobori T."/>
            <person name="Green R.E."/>
            <person name="Gustincich S."/>
            <person name="Harbers M."/>
            <person name="Hayashi Y."/>
            <person name="Hensch T.K."/>
            <person name="Hirokawa N."/>
            <person name="Hill D."/>
            <person name="Huminiecki L."/>
            <person name="Iacono M."/>
            <person name="Ikeo K."/>
            <person name="Iwama A."/>
            <person name="Ishikawa T."/>
            <person name="Jakt M."/>
            <person name="Kanapin A."/>
            <person name="Katoh M."/>
            <person name="Kawasawa Y."/>
            <person name="Kelso J."/>
            <person name="Kitamura H."/>
            <person name="Kitano H."/>
            <person name="Kollias G."/>
            <person name="Krishnan S.P."/>
            <person name="Kruger A."/>
            <person name="Kummerfeld S.K."/>
            <person name="Kurochkin I.V."/>
            <person name="Lareau L.F."/>
            <person name="Lazarevic D."/>
            <person name="Lipovich L."/>
            <person name="Liu J."/>
            <person name="Liuni S."/>
            <person name="McWilliam S."/>
            <person name="Madan Babu M."/>
            <person name="Madera M."/>
            <person name="Marchionni L."/>
            <person name="Matsuda H."/>
            <person name="Matsuzawa S."/>
            <person name="Miki H."/>
            <person name="Mignone F."/>
            <person name="Miyake S."/>
            <person name="Morris K."/>
            <person name="Mottagui-Tabar S."/>
            <person name="Mulder N."/>
            <person name="Nakano N."/>
            <person name="Nakauchi H."/>
            <person name="Ng P."/>
            <person name="Nilsson R."/>
            <person name="Nishiguchi S."/>
            <person name="Nishikawa S."/>
            <person name="Nori F."/>
            <person name="Ohara O."/>
            <person name="Okazaki Y."/>
            <person name="Orlando V."/>
            <person name="Pang K.C."/>
            <person name="Pavan W.J."/>
            <person name="Pavesi G."/>
            <person name="Pesole G."/>
            <person name="Petrovsky N."/>
            <person name="Piazza S."/>
            <person name="Reed J."/>
            <person name="Reid J.F."/>
            <person name="Ring B.Z."/>
            <person name="Ringwald M."/>
            <person name="Rost B."/>
            <person name="Ruan Y."/>
            <person name="Salzberg S.L."/>
            <person name="Sandelin A."/>
            <person name="Schneider C."/>
            <person name="Schoenbach C."/>
            <person name="Sekiguchi K."/>
            <person name="Semple C.A."/>
            <person name="Seno S."/>
            <person name="Sessa L."/>
            <person name="Sheng Y."/>
            <person name="Shibata Y."/>
            <person name="Shimada H."/>
            <person name="Shimada K."/>
            <person name="Silva D."/>
            <person name="Sinclair B."/>
            <person name="Sperling S."/>
            <person name="Stupka E."/>
            <person name="Sugiura K."/>
            <person name="Sultana R."/>
            <person name="Takenaka Y."/>
            <person name="Taki K."/>
            <person name="Tammoja K."/>
            <person name="Tan S.L."/>
            <person name="Tang S."/>
            <person name="Taylor M.S."/>
            <person name="Tegner J."/>
            <person name="Teichmann S.A."/>
            <person name="Ueda H.R."/>
            <person name="van Nimwegen E."/>
            <person name="Verardo R."/>
            <person name="Wei C.L."/>
            <person name="Yagi K."/>
            <person name="Yamanishi H."/>
            <person name="Zabarovsky E."/>
            <person name="Zhu S."/>
            <person name="Zimmer A."/>
            <person name="Hide W."/>
            <person name="Bult C."/>
            <person name="Grimmond S.M."/>
            <person name="Teasdale R.D."/>
            <person name="Liu E.T."/>
            <person name="Brusic V."/>
            <person name="Quackenbush J."/>
            <person name="Wahlestedt C."/>
            <person name="Mattick J.S."/>
            <person name="Hume D.A."/>
            <person name="Kai C."/>
            <person name="Sasaki D."/>
            <person name="Tomaru Y."/>
            <person name="Fukuda S."/>
            <person name="Kanamori-Katayama M."/>
            <person name="Suzuki M."/>
            <person name="Aoki J."/>
            <person name="Arakawa T."/>
            <person name="Iida J."/>
            <person name="Imamura K."/>
            <person name="Itoh M."/>
            <person name="Kato T."/>
            <person name="Kawaji H."/>
            <person name="Kawagashira N."/>
            <person name="Kawashima T."/>
            <person name="Kojima M."/>
            <person name="Kondo S."/>
            <person name="Konno H."/>
            <person name="Nakano K."/>
            <person name="Ninomiya N."/>
            <person name="Nishio T."/>
            <person name="Okada M."/>
            <person name="Plessy C."/>
            <person name="Shibata K."/>
            <person name="Shiraki T."/>
            <person name="Suzuki S."/>
            <person name="Tagami M."/>
            <person name="Waki K."/>
            <person name="Watahiki A."/>
            <person name="Okamura-Oho Y."/>
            <person name="Suzuki H."/>
            <person name="Kawai J."/>
            <person name="Hayashizaki Y."/>
        </authorList>
    </citation>
    <scope>NUCLEOTIDE SEQUENCE [LARGE SCALE MRNA]</scope>
    <source>
        <strain>C57BL/6J</strain>
        <tissue>Embryo</tissue>
    </source>
</reference>
<reference evidence="5" key="2">
    <citation type="journal article" date="2009" name="PLoS Biol.">
        <title>Lineage-specific biology revealed by a finished genome assembly of the mouse.</title>
        <authorList>
            <person name="Church D.M."/>
            <person name="Goodstadt L."/>
            <person name="Hillier L.W."/>
            <person name="Zody M.C."/>
            <person name="Goldstein S."/>
            <person name="She X."/>
            <person name="Bult C.J."/>
            <person name="Agarwala R."/>
            <person name="Cherry J.L."/>
            <person name="DiCuccio M."/>
            <person name="Hlavina W."/>
            <person name="Kapustin Y."/>
            <person name="Meric P."/>
            <person name="Maglott D."/>
            <person name="Birtle Z."/>
            <person name="Marques A.C."/>
            <person name="Graves T."/>
            <person name="Zhou S."/>
            <person name="Teague B."/>
            <person name="Potamousis K."/>
            <person name="Churas C."/>
            <person name="Place M."/>
            <person name="Herschleb J."/>
            <person name="Runnheim R."/>
            <person name="Forrest D."/>
            <person name="Amos-Landgraf J."/>
            <person name="Schwartz D.C."/>
            <person name="Cheng Z."/>
            <person name="Lindblad-Toh K."/>
            <person name="Eichler E.E."/>
            <person name="Ponting C.P."/>
        </authorList>
    </citation>
    <scope>NUCLEOTIDE SEQUENCE [LARGE SCALE GENOMIC DNA]</scope>
    <source>
        <strain evidence="5">C57BL/6J</strain>
    </source>
</reference>
<reference key="3">
    <citation type="journal article" date="2010" name="Cell">
        <title>A tissue-specific atlas of mouse protein phosphorylation and expression.</title>
        <authorList>
            <person name="Huttlin E.L."/>
            <person name="Jedrychowski M.P."/>
            <person name="Elias J.E."/>
            <person name="Goswami T."/>
            <person name="Rad R."/>
            <person name="Beausoleil S.A."/>
            <person name="Villen J."/>
            <person name="Haas W."/>
            <person name="Sowa M.E."/>
            <person name="Gygi S.P."/>
        </authorList>
    </citation>
    <scope>IDENTIFICATION BY MASS SPECTROMETRY [LARGE SCALE ANALYSIS]</scope>
    <source>
        <tissue>Liver</tissue>
        <tissue>Spleen</tissue>
        <tissue>Testis</tissue>
    </source>
</reference>
<proteinExistence type="evidence at protein level"/>
<evidence type="ECO:0000250" key="1">
    <source>
        <dbReference type="UniProtKB" id="P38166"/>
    </source>
</evidence>
<evidence type="ECO:0000255" key="2"/>
<evidence type="ECO:0000305" key="3"/>
<evidence type="ECO:0000312" key="4">
    <source>
        <dbReference type="MGI" id="MGI:1914408"/>
    </source>
</evidence>
<evidence type="ECO:0000312" key="5">
    <source>
        <dbReference type="Proteomes" id="UP000000589"/>
    </source>
</evidence>
<organism>
    <name type="scientific">Mus musculus</name>
    <name type="common">Mouse</name>
    <dbReference type="NCBI Taxonomy" id="10090"/>
    <lineage>
        <taxon>Eukaryota</taxon>
        <taxon>Metazoa</taxon>
        <taxon>Chordata</taxon>
        <taxon>Craniata</taxon>
        <taxon>Vertebrata</taxon>
        <taxon>Euteleostomi</taxon>
        <taxon>Mammalia</taxon>
        <taxon>Eutheria</taxon>
        <taxon>Euarchontoglires</taxon>
        <taxon>Glires</taxon>
        <taxon>Rodentia</taxon>
        <taxon>Myomorpha</taxon>
        <taxon>Muroidea</taxon>
        <taxon>Muridae</taxon>
        <taxon>Murinae</taxon>
        <taxon>Mus</taxon>
        <taxon>Mus</taxon>
    </lineage>
</organism>
<comment type="function">
    <text evidence="1">May be involved in fusion of retrograde transport vesicles derived from an endocytic compartment with the Golgi complex.</text>
</comment>
<comment type="subcellular location">
    <subcellularLocation>
        <location evidence="2">Membrane</location>
        <topology evidence="2">Multi-pass membrane protein</topology>
    </subcellularLocation>
</comment>
<comment type="similarity">
    <text evidence="2">Belongs to the SFT2 family.</text>
</comment>
<comment type="sequence caution" evidence="3">
    <conflict type="frameshift">
        <sequence resource="EMBL-CDS" id="BAB27904"/>
    </conflict>
</comment>
<accession>Q9CSV6</accession>
<accession>E9QJT3</accession>
<gene>
    <name evidence="4" type="primary">Sft2d3</name>
</gene>